<evidence type="ECO:0000250" key="1"/>
<evidence type="ECO:0000250" key="2">
    <source>
        <dbReference type="UniProtKB" id="Q9HWF9"/>
    </source>
</evidence>
<evidence type="ECO:0000255" key="3">
    <source>
        <dbReference type="PROSITE-ProRule" id="PRU00085"/>
    </source>
</evidence>
<evidence type="ECO:0000305" key="4"/>
<dbReference type="EC" id="1.16.3.1"/>
<dbReference type="EMBL" id="X76906">
    <property type="protein sequence ID" value="CAA54227.1"/>
    <property type="molecule type" value="Genomic_DNA"/>
</dbReference>
<dbReference type="SMR" id="P43314"/>
<dbReference type="GO" id="GO:0005829">
    <property type="term" value="C:cytosol"/>
    <property type="evidence" value="ECO:0007669"/>
    <property type="project" value="TreeGrafter"/>
</dbReference>
<dbReference type="GO" id="GO:0008199">
    <property type="term" value="F:ferric iron binding"/>
    <property type="evidence" value="ECO:0007669"/>
    <property type="project" value="InterPro"/>
</dbReference>
<dbReference type="GO" id="GO:0004322">
    <property type="term" value="F:ferroxidase activity"/>
    <property type="evidence" value="ECO:0007669"/>
    <property type="project" value="UniProtKB-EC"/>
</dbReference>
<dbReference type="GO" id="GO:0020037">
    <property type="term" value="F:heme binding"/>
    <property type="evidence" value="ECO:0007669"/>
    <property type="project" value="TreeGrafter"/>
</dbReference>
<dbReference type="GO" id="GO:0006879">
    <property type="term" value="P:intracellular iron ion homeostasis"/>
    <property type="evidence" value="ECO:0007669"/>
    <property type="project" value="UniProtKB-KW"/>
</dbReference>
<dbReference type="GO" id="GO:0006826">
    <property type="term" value="P:iron ion transport"/>
    <property type="evidence" value="ECO:0007669"/>
    <property type="project" value="UniProtKB-KW"/>
</dbReference>
<dbReference type="CDD" id="cd00907">
    <property type="entry name" value="Bacterioferritin"/>
    <property type="match status" value="1"/>
</dbReference>
<dbReference type="FunFam" id="1.20.1260.10:FF:000005">
    <property type="entry name" value="Bacterioferritin"/>
    <property type="match status" value="1"/>
</dbReference>
<dbReference type="Gene3D" id="1.20.1260.10">
    <property type="match status" value="1"/>
</dbReference>
<dbReference type="InterPro" id="IPR002024">
    <property type="entry name" value="Bacterioferritin"/>
</dbReference>
<dbReference type="InterPro" id="IPR012347">
    <property type="entry name" value="Ferritin-like"/>
</dbReference>
<dbReference type="InterPro" id="IPR009040">
    <property type="entry name" value="Ferritin-like_diiron"/>
</dbReference>
<dbReference type="InterPro" id="IPR009078">
    <property type="entry name" value="Ferritin-like_SF"/>
</dbReference>
<dbReference type="InterPro" id="IPR008331">
    <property type="entry name" value="Ferritin_DPS_dom"/>
</dbReference>
<dbReference type="NCBIfam" id="TIGR00754">
    <property type="entry name" value="bfr"/>
    <property type="match status" value="1"/>
</dbReference>
<dbReference type="PANTHER" id="PTHR30295">
    <property type="entry name" value="BACTERIOFERRITIN"/>
    <property type="match status" value="1"/>
</dbReference>
<dbReference type="PANTHER" id="PTHR30295:SF0">
    <property type="entry name" value="BACTERIOFERRITIN"/>
    <property type="match status" value="1"/>
</dbReference>
<dbReference type="Pfam" id="PF00210">
    <property type="entry name" value="Ferritin"/>
    <property type="match status" value="1"/>
</dbReference>
<dbReference type="PIRSF" id="PIRSF002560">
    <property type="entry name" value="Bacterioferritin"/>
    <property type="match status" value="1"/>
</dbReference>
<dbReference type="PRINTS" id="PR00601">
    <property type="entry name" value="BACFERRITIN"/>
</dbReference>
<dbReference type="SUPFAM" id="SSF47240">
    <property type="entry name" value="Ferritin-like"/>
    <property type="match status" value="1"/>
</dbReference>
<dbReference type="PROSITE" id="PS00549">
    <property type="entry name" value="BACTERIOFERRITIN"/>
    <property type="match status" value="1"/>
</dbReference>
<dbReference type="PROSITE" id="PS50905">
    <property type="entry name" value="FERRITIN_LIKE"/>
    <property type="match status" value="1"/>
</dbReference>
<organism>
    <name type="scientific">Mycobacterium avium</name>
    <dbReference type="NCBI Taxonomy" id="1764"/>
    <lineage>
        <taxon>Bacteria</taxon>
        <taxon>Bacillati</taxon>
        <taxon>Actinomycetota</taxon>
        <taxon>Actinomycetes</taxon>
        <taxon>Mycobacteriales</taxon>
        <taxon>Mycobacteriaceae</taxon>
        <taxon>Mycobacterium</taxon>
        <taxon>Mycobacterium avium complex (MAC)</taxon>
    </lineage>
</organism>
<feature type="chain" id="PRO_0000192598" description="Bacterioferritin">
    <location>
        <begin position="1"/>
        <end position="159"/>
    </location>
</feature>
<feature type="domain" description="Ferritin-like diiron" evidence="3">
    <location>
        <begin position="1"/>
        <end position="145"/>
    </location>
</feature>
<feature type="binding site" evidence="3">
    <location>
        <position position="51"/>
    </location>
    <ligand>
        <name>Fe cation</name>
        <dbReference type="ChEBI" id="CHEBI:24875"/>
        <label>1</label>
    </ligand>
</feature>
<feature type="binding site" evidence="3">
    <location>
        <position position="51"/>
    </location>
    <ligand>
        <name>Fe cation</name>
        <dbReference type="ChEBI" id="CHEBI:24875"/>
        <label>2</label>
    </ligand>
</feature>
<feature type="binding site" description="axial binding residue" evidence="3">
    <location>
        <position position="52"/>
    </location>
    <ligand>
        <name>heme b</name>
        <dbReference type="ChEBI" id="CHEBI:60344"/>
        <note>ligand shared between dimeric partners</note>
    </ligand>
    <ligandPart>
        <name>Fe</name>
        <dbReference type="ChEBI" id="CHEBI:18248"/>
    </ligandPart>
</feature>
<feature type="binding site" evidence="3">
    <location>
        <position position="54"/>
    </location>
    <ligand>
        <name>Fe cation</name>
        <dbReference type="ChEBI" id="CHEBI:24875"/>
        <label>1</label>
    </ligand>
</feature>
<feature type="binding site" evidence="3">
    <location>
        <position position="94"/>
    </location>
    <ligand>
        <name>Fe cation</name>
        <dbReference type="ChEBI" id="CHEBI:24875"/>
        <label>2</label>
    </ligand>
</feature>
<feature type="binding site" evidence="3">
    <location>
        <position position="127"/>
    </location>
    <ligand>
        <name>Fe cation</name>
        <dbReference type="ChEBI" id="CHEBI:24875"/>
        <label>1</label>
    </ligand>
</feature>
<feature type="binding site" evidence="3">
    <location>
        <position position="127"/>
    </location>
    <ligand>
        <name>Fe cation</name>
        <dbReference type="ChEBI" id="CHEBI:24875"/>
        <label>2</label>
    </ligand>
</feature>
<feature type="binding site" evidence="3">
    <location>
        <position position="130"/>
    </location>
    <ligand>
        <name>Fe cation</name>
        <dbReference type="ChEBI" id="CHEBI:24875"/>
        <label>2</label>
    </ligand>
</feature>
<gene>
    <name type="primary">bfr</name>
</gene>
<accession>P43314</accession>
<comment type="function">
    <text evidence="1">Iron-storage protein, whose ferroxidase center binds Fe(2+), oxidizes it using dioxygen to Fe(3+), and participates in the subsequent Fe(3+) oxide mineral core formation within the central cavity of the BFR protein shell.</text>
</comment>
<comment type="catalytic activity">
    <reaction>
        <text>4 Fe(2+) + O2 + 4 H(+) = 4 Fe(3+) + 2 H2O</text>
        <dbReference type="Rhea" id="RHEA:11148"/>
        <dbReference type="ChEBI" id="CHEBI:15377"/>
        <dbReference type="ChEBI" id="CHEBI:15378"/>
        <dbReference type="ChEBI" id="CHEBI:15379"/>
        <dbReference type="ChEBI" id="CHEBI:29033"/>
        <dbReference type="ChEBI" id="CHEBI:29034"/>
        <dbReference type="EC" id="1.16.3.1"/>
    </reaction>
</comment>
<comment type="catalytic activity">
    <reaction evidence="2">
        <text>Fe(2+)(in) = Fe(2+)(out)</text>
        <dbReference type="Rhea" id="RHEA:28486"/>
        <dbReference type="ChEBI" id="CHEBI:29033"/>
    </reaction>
</comment>
<comment type="cofactor">
    <cofactor evidence="1">
        <name>heme b</name>
        <dbReference type="ChEBI" id="CHEBI:60344"/>
    </cofactor>
    <text evidence="1">Binds 1 heme b (iron(II)-protoporphyrin IX) group per dimer.</text>
</comment>
<comment type="subunit">
    <text evidence="1">Homooligomer of 24 subunits, arranged as 12 dimers, that are packed together to form an approximately spherical molecule with a central cavity, in which large amounts of iron can be deposited.</text>
</comment>
<comment type="similarity">
    <text evidence="4">Belongs to the bacterioferritin family.</text>
</comment>
<name>BFR_MYCAV</name>
<keyword id="KW-0349">Heme</keyword>
<keyword id="KW-0406">Ion transport</keyword>
<keyword id="KW-0408">Iron</keyword>
<keyword id="KW-0409">Iron storage</keyword>
<keyword id="KW-0410">Iron transport</keyword>
<keyword id="KW-0479">Metal-binding</keyword>
<keyword id="KW-0560">Oxidoreductase</keyword>
<keyword id="KW-0813">Transport</keyword>
<proteinExistence type="inferred from homology"/>
<protein>
    <recommendedName>
        <fullName>Bacterioferritin</fullName>
        <shortName>BFR</shortName>
        <ecNumber>1.16.3.1</ecNumber>
    </recommendedName>
</protein>
<sequence>MQGDPEVLRLLNEQLTTQLTAINQYFLHSKMQDNWGFTELAEHTRAESFDEMRHAEAITDRILLLDGLPNYQRLFSLRIGQTLREQFEADLAIEYEVMDRLKPAIILCREKQDSTTATLFEQIVADEEKHIDYLETQLELMDKLGVELYSAQCVSRPPS</sequence>
<reference key="1">
    <citation type="journal article" date="1994" name="Gene">
        <title>Complete sequence of the gene encoding the bacterioferritin subunit of Mycobacterium avium subspecies silvaticum.</title>
        <authorList>
            <person name="Inglis N.F."/>
            <person name="Stevenson K."/>
            <person name="Hosie A.H.F."/>
            <person name="Sharp J.M."/>
        </authorList>
    </citation>
    <scope>NUCLEOTIDE SEQUENCE [GENOMIC DNA]</scope>
    <source>
        <strain>Subsp. silvaticum JD88/118</strain>
    </source>
</reference>